<proteinExistence type="inferred from homology"/>
<keyword id="KW-0030">Aminoacyl-tRNA synthetase</keyword>
<keyword id="KW-0067">ATP-binding</keyword>
<keyword id="KW-0963">Cytoplasm</keyword>
<keyword id="KW-0436">Ligase</keyword>
<keyword id="KW-0460">Magnesium</keyword>
<keyword id="KW-0479">Metal-binding</keyword>
<keyword id="KW-0547">Nucleotide-binding</keyword>
<keyword id="KW-0648">Protein biosynthesis</keyword>
<keyword id="KW-1185">Reference proteome</keyword>
<comment type="catalytic activity">
    <reaction evidence="1">
        <text>tRNA(Phe) + L-phenylalanine + ATP = L-phenylalanyl-tRNA(Phe) + AMP + diphosphate + H(+)</text>
        <dbReference type="Rhea" id="RHEA:19413"/>
        <dbReference type="Rhea" id="RHEA-COMP:9668"/>
        <dbReference type="Rhea" id="RHEA-COMP:9699"/>
        <dbReference type="ChEBI" id="CHEBI:15378"/>
        <dbReference type="ChEBI" id="CHEBI:30616"/>
        <dbReference type="ChEBI" id="CHEBI:33019"/>
        <dbReference type="ChEBI" id="CHEBI:58095"/>
        <dbReference type="ChEBI" id="CHEBI:78442"/>
        <dbReference type="ChEBI" id="CHEBI:78531"/>
        <dbReference type="ChEBI" id="CHEBI:456215"/>
        <dbReference type="EC" id="6.1.1.20"/>
    </reaction>
</comment>
<comment type="cofactor">
    <cofactor evidence="1">
        <name>Mg(2+)</name>
        <dbReference type="ChEBI" id="CHEBI:18420"/>
    </cofactor>
    <text evidence="1">Binds 2 magnesium ions per tetramer.</text>
</comment>
<comment type="subunit">
    <text evidence="1">Tetramer of two alpha and two beta subunits.</text>
</comment>
<comment type="subcellular location">
    <subcellularLocation>
        <location evidence="1">Cytoplasm</location>
    </subcellularLocation>
</comment>
<comment type="similarity">
    <text evidence="1">Belongs to the class-II aminoacyl-tRNA synthetase family. Phe-tRNA synthetase alpha subunit type 1 subfamily.</text>
</comment>
<gene>
    <name evidence="1" type="primary">pheS</name>
    <name type="ordered locus">Mnod_5552</name>
</gene>
<name>SYFA_METNO</name>
<feature type="chain" id="PRO_1000199317" description="Phenylalanine--tRNA ligase alpha subunit">
    <location>
        <begin position="1"/>
        <end position="360"/>
    </location>
</feature>
<feature type="binding site" evidence="1">
    <location>
        <position position="260"/>
    </location>
    <ligand>
        <name>Mg(2+)</name>
        <dbReference type="ChEBI" id="CHEBI:18420"/>
        <note>shared with beta subunit</note>
    </ligand>
</feature>
<organism>
    <name type="scientific">Methylobacterium nodulans (strain LMG 21967 / CNCM I-2342 / ORS 2060)</name>
    <dbReference type="NCBI Taxonomy" id="460265"/>
    <lineage>
        <taxon>Bacteria</taxon>
        <taxon>Pseudomonadati</taxon>
        <taxon>Pseudomonadota</taxon>
        <taxon>Alphaproteobacteria</taxon>
        <taxon>Hyphomicrobiales</taxon>
        <taxon>Methylobacteriaceae</taxon>
        <taxon>Methylobacterium</taxon>
    </lineage>
</organism>
<accession>B8IP76</accession>
<sequence length="360" mass="40180">MTDLQSLESDLLAQVQGAPDEAALEGVRVAALGKKGAVSELLKTLGAMSPEERKERGPLINGLRDRVHGAILARRETLAEAALEARLAAERIDVTLPVREGPETRGRVHPITQVIDEITAIFGDMGFSIAEGPDIETDELNFTALNFPEGHPAREMHDTFFLPPGRDGTRKLLRTHTSPVQVRTMRAQEPPIRVICPGRTYRHDSDQTHTPMFHQVEGLVIDRSANLAHLKWILEEFCKAFFEVESVKMRFRPSFFPFTEPSAEVDIQCSRQGGEIRFGEGNDWLEILGCGMVHPNVLRHCGLDPDQVQGFAWGLGIDRIAMLKYGMPDLRPFFEADMRWLDHYGFRPLDIPSLVGGLTG</sequence>
<evidence type="ECO:0000255" key="1">
    <source>
        <dbReference type="HAMAP-Rule" id="MF_00281"/>
    </source>
</evidence>
<protein>
    <recommendedName>
        <fullName evidence="1">Phenylalanine--tRNA ligase alpha subunit</fullName>
        <ecNumber evidence="1">6.1.1.20</ecNumber>
    </recommendedName>
    <alternativeName>
        <fullName evidence="1">Phenylalanyl-tRNA synthetase alpha subunit</fullName>
        <shortName evidence="1">PheRS</shortName>
    </alternativeName>
</protein>
<dbReference type="EC" id="6.1.1.20" evidence="1"/>
<dbReference type="EMBL" id="CP001349">
    <property type="protein sequence ID" value="ACL60394.1"/>
    <property type="molecule type" value="Genomic_DNA"/>
</dbReference>
<dbReference type="RefSeq" id="WP_015932000.1">
    <property type="nucleotide sequence ID" value="NC_011894.1"/>
</dbReference>
<dbReference type="SMR" id="B8IP76"/>
<dbReference type="STRING" id="460265.Mnod_5552"/>
<dbReference type="KEGG" id="mno:Mnod_5552"/>
<dbReference type="eggNOG" id="COG0016">
    <property type="taxonomic scope" value="Bacteria"/>
</dbReference>
<dbReference type="HOGENOM" id="CLU_025086_0_1_5"/>
<dbReference type="OrthoDB" id="9800719at2"/>
<dbReference type="Proteomes" id="UP000008207">
    <property type="component" value="Chromosome"/>
</dbReference>
<dbReference type="GO" id="GO:0005737">
    <property type="term" value="C:cytoplasm"/>
    <property type="evidence" value="ECO:0007669"/>
    <property type="project" value="UniProtKB-SubCell"/>
</dbReference>
<dbReference type="GO" id="GO:0005524">
    <property type="term" value="F:ATP binding"/>
    <property type="evidence" value="ECO:0007669"/>
    <property type="project" value="UniProtKB-UniRule"/>
</dbReference>
<dbReference type="GO" id="GO:0000287">
    <property type="term" value="F:magnesium ion binding"/>
    <property type="evidence" value="ECO:0007669"/>
    <property type="project" value="UniProtKB-UniRule"/>
</dbReference>
<dbReference type="GO" id="GO:0004826">
    <property type="term" value="F:phenylalanine-tRNA ligase activity"/>
    <property type="evidence" value="ECO:0007669"/>
    <property type="project" value="UniProtKB-UniRule"/>
</dbReference>
<dbReference type="GO" id="GO:0000049">
    <property type="term" value="F:tRNA binding"/>
    <property type="evidence" value="ECO:0007669"/>
    <property type="project" value="InterPro"/>
</dbReference>
<dbReference type="GO" id="GO:0006432">
    <property type="term" value="P:phenylalanyl-tRNA aminoacylation"/>
    <property type="evidence" value="ECO:0007669"/>
    <property type="project" value="UniProtKB-UniRule"/>
</dbReference>
<dbReference type="CDD" id="cd00496">
    <property type="entry name" value="PheRS_alpha_core"/>
    <property type="match status" value="1"/>
</dbReference>
<dbReference type="FunFam" id="3.30.930.10:FF:000003">
    <property type="entry name" value="Phenylalanine--tRNA ligase alpha subunit"/>
    <property type="match status" value="1"/>
</dbReference>
<dbReference type="Gene3D" id="3.30.930.10">
    <property type="entry name" value="Bira Bifunctional Protein, Domain 2"/>
    <property type="match status" value="1"/>
</dbReference>
<dbReference type="HAMAP" id="MF_00281">
    <property type="entry name" value="Phe_tRNA_synth_alpha1"/>
    <property type="match status" value="1"/>
</dbReference>
<dbReference type="InterPro" id="IPR006195">
    <property type="entry name" value="aa-tRNA-synth_II"/>
</dbReference>
<dbReference type="InterPro" id="IPR045864">
    <property type="entry name" value="aa-tRNA-synth_II/BPL/LPL"/>
</dbReference>
<dbReference type="InterPro" id="IPR004529">
    <property type="entry name" value="Phe-tRNA-synth_IIc_asu"/>
</dbReference>
<dbReference type="InterPro" id="IPR004188">
    <property type="entry name" value="Phe-tRNA_ligase_II_N"/>
</dbReference>
<dbReference type="InterPro" id="IPR022911">
    <property type="entry name" value="Phe_tRNA_ligase_alpha1_bac"/>
</dbReference>
<dbReference type="InterPro" id="IPR002319">
    <property type="entry name" value="Phenylalanyl-tRNA_Synthase"/>
</dbReference>
<dbReference type="InterPro" id="IPR010978">
    <property type="entry name" value="tRNA-bd_arm"/>
</dbReference>
<dbReference type="NCBIfam" id="TIGR00468">
    <property type="entry name" value="pheS"/>
    <property type="match status" value="1"/>
</dbReference>
<dbReference type="PANTHER" id="PTHR11538:SF41">
    <property type="entry name" value="PHENYLALANINE--TRNA LIGASE, MITOCHONDRIAL"/>
    <property type="match status" value="1"/>
</dbReference>
<dbReference type="PANTHER" id="PTHR11538">
    <property type="entry name" value="PHENYLALANYL-TRNA SYNTHETASE"/>
    <property type="match status" value="1"/>
</dbReference>
<dbReference type="Pfam" id="PF02912">
    <property type="entry name" value="Phe_tRNA-synt_N"/>
    <property type="match status" value="1"/>
</dbReference>
<dbReference type="Pfam" id="PF01409">
    <property type="entry name" value="tRNA-synt_2d"/>
    <property type="match status" value="1"/>
</dbReference>
<dbReference type="SUPFAM" id="SSF55681">
    <property type="entry name" value="Class II aaRS and biotin synthetases"/>
    <property type="match status" value="1"/>
</dbReference>
<dbReference type="SUPFAM" id="SSF46589">
    <property type="entry name" value="tRNA-binding arm"/>
    <property type="match status" value="1"/>
</dbReference>
<dbReference type="PROSITE" id="PS50862">
    <property type="entry name" value="AA_TRNA_LIGASE_II"/>
    <property type="match status" value="1"/>
</dbReference>
<reference key="1">
    <citation type="submission" date="2009-01" db="EMBL/GenBank/DDBJ databases">
        <title>Complete sequence of chromosome of Methylobacterium nodulans ORS 2060.</title>
        <authorList>
            <consortium name="US DOE Joint Genome Institute"/>
            <person name="Lucas S."/>
            <person name="Copeland A."/>
            <person name="Lapidus A."/>
            <person name="Glavina del Rio T."/>
            <person name="Dalin E."/>
            <person name="Tice H."/>
            <person name="Bruce D."/>
            <person name="Goodwin L."/>
            <person name="Pitluck S."/>
            <person name="Sims D."/>
            <person name="Brettin T."/>
            <person name="Detter J.C."/>
            <person name="Han C."/>
            <person name="Larimer F."/>
            <person name="Land M."/>
            <person name="Hauser L."/>
            <person name="Kyrpides N."/>
            <person name="Ivanova N."/>
            <person name="Marx C.J."/>
            <person name="Richardson P."/>
        </authorList>
    </citation>
    <scope>NUCLEOTIDE SEQUENCE [LARGE SCALE GENOMIC DNA]</scope>
    <source>
        <strain>LMG 21967 / CNCM I-2342 / ORS 2060</strain>
    </source>
</reference>